<proteinExistence type="inferred from homology"/>
<feature type="signal peptide">
    <location>
        <begin position="1"/>
        <end position="23"/>
    </location>
</feature>
<feature type="chain" id="PRO_0000016386" description="Interferon alpha-B">
    <location>
        <begin position="24"/>
        <end position="189"/>
    </location>
</feature>
<feature type="disulfide bond" evidence="1">
    <location>
        <begin position="24"/>
        <end position="122"/>
    </location>
</feature>
<feature type="disulfide bond" evidence="1">
    <location>
        <begin position="52"/>
        <end position="162"/>
    </location>
</feature>
<accession>P05008</accession>
<protein>
    <recommendedName>
        <fullName>Interferon alpha-B</fullName>
    </recommendedName>
</protein>
<reference key="1">
    <citation type="journal article" date="1985" name="J. Biol. Chem.">
        <title>Bovine interferon alpha genes. Structure and expression.</title>
        <authorList>
            <person name="Velan B."/>
            <person name="Cohen S."/>
            <person name="Grosfeld H."/>
            <person name="Leitner M."/>
            <person name="Shafferman A."/>
        </authorList>
    </citation>
    <scope>NUCLEOTIDE SEQUENCE [GENOMIC DNA]</scope>
</reference>
<name>IFNAB_BOVIN</name>
<dbReference type="EMBL" id="M10953">
    <property type="protein sequence ID" value="AAA30574.1"/>
    <property type="molecule type" value="Genomic_DNA"/>
</dbReference>
<dbReference type="PIR" id="B26028">
    <property type="entry name" value="IVBOIB"/>
</dbReference>
<dbReference type="SMR" id="P05008"/>
<dbReference type="FunCoup" id="P05008">
    <property type="interactions" value="30"/>
</dbReference>
<dbReference type="InParanoid" id="P05008"/>
<dbReference type="Proteomes" id="UP000009136">
    <property type="component" value="Unplaced"/>
</dbReference>
<dbReference type="GO" id="GO:0005615">
    <property type="term" value="C:extracellular space"/>
    <property type="evidence" value="ECO:0000318"/>
    <property type="project" value="GO_Central"/>
</dbReference>
<dbReference type="GO" id="GO:0005125">
    <property type="term" value="F:cytokine activity"/>
    <property type="evidence" value="ECO:0000318"/>
    <property type="project" value="GO_Central"/>
</dbReference>
<dbReference type="GO" id="GO:0005132">
    <property type="term" value="F:type I interferon receptor binding"/>
    <property type="evidence" value="ECO:0000318"/>
    <property type="project" value="GO_Central"/>
</dbReference>
<dbReference type="GO" id="GO:0002250">
    <property type="term" value="P:adaptive immune response"/>
    <property type="evidence" value="ECO:0000318"/>
    <property type="project" value="GO_Central"/>
</dbReference>
<dbReference type="GO" id="GO:0002312">
    <property type="term" value="P:B cell activation involved in immune response"/>
    <property type="evidence" value="ECO:0000318"/>
    <property type="project" value="GO_Central"/>
</dbReference>
<dbReference type="GO" id="GO:0051607">
    <property type="term" value="P:defense response to virus"/>
    <property type="evidence" value="ECO:0007669"/>
    <property type="project" value="UniProtKB-KW"/>
</dbReference>
<dbReference type="GO" id="GO:0006959">
    <property type="term" value="P:humoral immune response"/>
    <property type="evidence" value="ECO:0000318"/>
    <property type="project" value="GO_Central"/>
</dbReference>
<dbReference type="GO" id="GO:0002323">
    <property type="term" value="P:natural killer cell activation involved in immune response"/>
    <property type="evidence" value="ECO:0000318"/>
    <property type="project" value="GO_Central"/>
</dbReference>
<dbReference type="GO" id="GO:0009891">
    <property type="term" value="P:positive regulation of biosynthetic process"/>
    <property type="evidence" value="ECO:0007669"/>
    <property type="project" value="UniProtKB-ARBA"/>
</dbReference>
<dbReference type="GO" id="GO:0043330">
    <property type="term" value="P:response to exogenous dsRNA"/>
    <property type="evidence" value="ECO:0000318"/>
    <property type="project" value="GO_Central"/>
</dbReference>
<dbReference type="GO" id="GO:0002286">
    <property type="term" value="P:T cell activation involved in immune response"/>
    <property type="evidence" value="ECO:0000318"/>
    <property type="project" value="GO_Central"/>
</dbReference>
<dbReference type="GO" id="GO:0060337">
    <property type="term" value="P:type I interferon-mediated signaling pathway"/>
    <property type="evidence" value="ECO:0000318"/>
    <property type="project" value="GO_Central"/>
</dbReference>
<dbReference type="CDD" id="cd00095">
    <property type="entry name" value="IFab"/>
    <property type="match status" value="1"/>
</dbReference>
<dbReference type="FunFam" id="1.20.1250.10:FF:000001">
    <property type="entry name" value="Interferon alpha"/>
    <property type="match status" value="1"/>
</dbReference>
<dbReference type="Gene3D" id="1.20.1250.10">
    <property type="match status" value="1"/>
</dbReference>
<dbReference type="InterPro" id="IPR009079">
    <property type="entry name" value="4_helix_cytokine-like_core"/>
</dbReference>
<dbReference type="InterPro" id="IPR000471">
    <property type="entry name" value="Interferon_alpha/beta/delta"/>
</dbReference>
<dbReference type="PANTHER" id="PTHR11691:SF60">
    <property type="entry name" value="INTERFERON ALPHA-5"/>
    <property type="match status" value="1"/>
</dbReference>
<dbReference type="PANTHER" id="PTHR11691">
    <property type="entry name" value="TYPE I INTERFERON"/>
    <property type="match status" value="1"/>
</dbReference>
<dbReference type="Pfam" id="PF00143">
    <property type="entry name" value="Interferon"/>
    <property type="match status" value="1"/>
</dbReference>
<dbReference type="PRINTS" id="PR00266">
    <property type="entry name" value="INTERFERONAB"/>
</dbReference>
<dbReference type="SMART" id="SM00076">
    <property type="entry name" value="IFabd"/>
    <property type="match status" value="1"/>
</dbReference>
<dbReference type="SUPFAM" id="SSF47266">
    <property type="entry name" value="4-helical cytokines"/>
    <property type="match status" value="1"/>
</dbReference>
<dbReference type="PROSITE" id="PS00252">
    <property type="entry name" value="INTERFERON_A_B_D"/>
    <property type="match status" value="1"/>
</dbReference>
<evidence type="ECO:0000250" key="1"/>
<evidence type="ECO:0000305" key="2"/>
<comment type="function">
    <text>Produced by macrophages, IFN-alpha have antiviral activities. Interferon stimulates the production of two enzymes: a protein kinase and an oligoadenylate synthetase.</text>
</comment>
<comment type="subcellular location">
    <subcellularLocation>
        <location>Secreted</location>
    </subcellularLocation>
</comment>
<comment type="similarity">
    <text evidence="2">Belongs to the alpha/beta interferon family.</text>
</comment>
<organism>
    <name type="scientific">Bos taurus</name>
    <name type="common">Bovine</name>
    <dbReference type="NCBI Taxonomy" id="9913"/>
    <lineage>
        <taxon>Eukaryota</taxon>
        <taxon>Metazoa</taxon>
        <taxon>Chordata</taxon>
        <taxon>Craniata</taxon>
        <taxon>Vertebrata</taxon>
        <taxon>Euteleostomi</taxon>
        <taxon>Mammalia</taxon>
        <taxon>Eutheria</taxon>
        <taxon>Laurasiatheria</taxon>
        <taxon>Artiodactyla</taxon>
        <taxon>Ruminantia</taxon>
        <taxon>Pecora</taxon>
        <taxon>Bovidae</taxon>
        <taxon>Bovinae</taxon>
        <taxon>Bos</taxon>
    </lineage>
</organism>
<gene>
    <name type="primary">IFNAB</name>
</gene>
<keyword id="KW-0051">Antiviral defense</keyword>
<keyword id="KW-0202">Cytokine</keyword>
<keyword id="KW-1015">Disulfide bond</keyword>
<keyword id="KW-1185">Reference proteome</keyword>
<keyword id="KW-0964">Secreted</keyword>
<keyword id="KW-0732">Signal</keyword>
<sequence>MAPAWSFLLALLLLSCNAICSLGCHLPHTHSLPNRRVLTLLRQLRRVSPSSCLQDRNDFAFPQEALGGSQLQKAQAISVLHEVTQHTFQLFSTEGSATTWDESLLDKLHAALDQQLTDLQACLRQEEGLRGAPLLKEGSSLAVRKYFHRLTLYLQEKRHSPCAWEVVRAEVMRAFSSSTNLQEKFRRKD</sequence>